<reference key="1">
    <citation type="journal article" date="2000" name="Eur. J. Biochem.">
        <title>Mast cell tryptase from pig lungs triggers infection by pneumotropic Sendai and influenza A viruses. Purification and characterization.</title>
        <authorList>
            <person name="Chen Y."/>
            <person name="Shiota M."/>
            <person name="Ohuchi M."/>
            <person name="Towatari T."/>
            <person name="Tashiro J."/>
            <person name="Murakami M."/>
            <person name="Yano M."/>
            <person name="Yang B."/>
            <person name="Kido H."/>
        </authorList>
    </citation>
    <scope>NUCLEOTIDE SEQUENCE [MRNA]</scope>
    <source>
        <tissue>Lung</tissue>
    </source>
</reference>
<comment type="function">
    <text>Tryptase is the major neutral protease present in mast cells and is secreted upon the coupled activation-degranulation response of this cell type.</text>
</comment>
<comment type="catalytic activity">
    <reaction>
        <text>Preferential cleavage: Arg-|-Xaa, Lys-|-Xaa, but with more restricted specificity than trypsin.</text>
        <dbReference type="EC" id="3.4.21.59"/>
    </reaction>
</comment>
<comment type="subunit">
    <text evidence="1">Homotetramer.</text>
</comment>
<comment type="subcellular location">
    <subcellularLocation>
        <location>Secreted</location>
    </subcellularLocation>
    <text>Released from the secretory granules upon mast cell activation.</text>
</comment>
<comment type="similarity">
    <text evidence="3">Belongs to the peptidase S1 family. Tryptase subfamily.</text>
</comment>
<proteinExistence type="evidence at transcript level"/>
<evidence type="ECO:0000250" key="1"/>
<evidence type="ECO:0000255" key="2"/>
<evidence type="ECO:0000255" key="3">
    <source>
        <dbReference type="PROSITE-ProRule" id="PRU00274"/>
    </source>
</evidence>
<sequence>MLNLLVLALPLLVSLVHTAPAPGQALERAGIVGGKEAPGHKWPWQVSLRCLDQYWKHFCGGSLIHPQWVLTAAHCFGPEKADPLYIRVQLGEQHLYYQDRLLLVSRIIVHPNYYDEVNGADIALLELEDPVNLSSHVQPVTLPPASETFPKGTRCWVTGWGDVHSGWPLPPPYPLKQVRVPIVENSECDMQYHLGLSTGDNIPIVRDDMLCAGSEGHDSCQGDSGGPLVCRVNGTWLQAGVVSWGEGCALPNRPGIYTRVTHYLDWIHQCIPRES</sequence>
<keyword id="KW-1015">Disulfide bond</keyword>
<keyword id="KW-0325">Glycoprotein</keyword>
<keyword id="KW-0378">Hydrolase</keyword>
<keyword id="KW-0645">Protease</keyword>
<keyword id="KW-1185">Reference proteome</keyword>
<keyword id="KW-0964">Secreted</keyword>
<keyword id="KW-0720">Serine protease</keyword>
<keyword id="KW-0732">Signal</keyword>
<keyword id="KW-0865">Zymogen</keyword>
<dbReference type="EC" id="3.4.21.59"/>
<dbReference type="EMBL" id="AB038652">
    <property type="protein sequence ID" value="BAA93614.1"/>
    <property type="molecule type" value="mRNA"/>
</dbReference>
<dbReference type="RefSeq" id="NP_999356.1">
    <property type="nucleotide sequence ID" value="NM_214191.1"/>
</dbReference>
<dbReference type="SMR" id="Q9N2D1"/>
<dbReference type="FunCoup" id="Q9N2D1">
    <property type="interactions" value="14"/>
</dbReference>
<dbReference type="STRING" id="9823.ENSSSCP00000036370"/>
<dbReference type="MEROPS" id="S01.118"/>
<dbReference type="GlyCosmos" id="Q9N2D1">
    <property type="glycosylation" value="2 sites, No reported glycans"/>
</dbReference>
<dbReference type="GlyGen" id="Q9N2D1">
    <property type="glycosylation" value="2 sites"/>
</dbReference>
<dbReference type="PaxDb" id="9823-ENSSSCP00000026057"/>
<dbReference type="PeptideAtlas" id="Q9N2D1"/>
<dbReference type="Ensembl" id="ENSSSCT00000042333.3">
    <property type="protein sequence ID" value="ENSSSCP00000036370.2"/>
    <property type="gene ID" value="ENSSSCG00000021222.4"/>
</dbReference>
<dbReference type="Ensembl" id="ENSSSCT00035025182.1">
    <property type="protein sequence ID" value="ENSSSCP00035009520.1"/>
    <property type="gene ID" value="ENSSSCG00035019421.1"/>
</dbReference>
<dbReference type="Ensembl" id="ENSSSCT00050107753.1">
    <property type="protein sequence ID" value="ENSSSCP00050047710.1"/>
    <property type="gene ID" value="ENSSSCG00050078183.1"/>
</dbReference>
<dbReference type="Ensembl" id="ENSSSCT00130037727">
    <property type="protein sequence ID" value="ENSSSCP00130026514"/>
    <property type="gene ID" value="ENSSSCG00130019440"/>
</dbReference>
<dbReference type="GeneID" id="397389"/>
<dbReference type="KEGG" id="ssc:397389"/>
<dbReference type="CTD" id="397389"/>
<dbReference type="eggNOG" id="KOG3627">
    <property type="taxonomic scope" value="Eukaryota"/>
</dbReference>
<dbReference type="GeneTree" id="ENSGT00940000162207"/>
<dbReference type="InParanoid" id="Q9N2D1"/>
<dbReference type="OMA" id="WGQINSE"/>
<dbReference type="OrthoDB" id="10002959at2759"/>
<dbReference type="Proteomes" id="UP000008227">
    <property type="component" value="Chromosome 3"/>
</dbReference>
<dbReference type="Proteomes" id="UP000314985">
    <property type="component" value="Unplaced"/>
</dbReference>
<dbReference type="Proteomes" id="UP000694570">
    <property type="component" value="Unplaced"/>
</dbReference>
<dbReference type="Proteomes" id="UP000694571">
    <property type="component" value="Unplaced"/>
</dbReference>
<dbReference type="Proteomes" id="UP000694720">
    <property type="component" value="Unplaced"/>
</dbReference>
<dbReference type="Proteomes" id="UP000694722">
    <property type="component" value="Unplaced"/>
</dbReference>
<dbReference type="Proteomes" id="UP000694723">
    <property type="component" value="Unplaced"/>
</dbReference>
<dbReference type="Proteomes" id="UP000694724">
    <property type="component" value="Unplaced"/>
</dbReference>
<dbReference type="Proteomes" id="UP000694725">
    <property type="component" value="Unplaced"/>
</dbReference>
<dbReference type="Proteomes" id="UP000694726">
    <property type="component" value="Unplaced"/>
</dbReference>
<dbReference type="Proteomes" id="UP000694727">
    <property type="component" value="Unplaced"/>
</dbReference>
<dbReference type="Proteomes" id="UP000694728">
    <property type="component" value="Unplaced"/>
</dbReference>
<dbReference type="GO" id="GO:0005576">
    <property type="term" value="C:extracellular region"/>
    <property type="evidence" value="ECO:0007669"/>
    <property type="project" value="UniProtKB-SubCell"/>
</dbReference>
<dbReference type="GO" id="GO:0004252">
    <property type="term" value="F:serine-type endopeptidase activity"/>
    <property type="evidence" value="ECO:0007669"/>
    <property type="project" value="UniProtKB-EC"/>
</dbReference>
<dbReference type="GO" id="GO:0006508">
    <property type="term" value="P:proteolysis"/>
    <property type="evidence" value="ECO:0007669"/>
    <property type="project" value="UniProtKB-KW"/>
</dbReference>
<dbReference type="CDD" id="cd00190">
    <property type="entry name" value="Tryp_SPc"/>
    <property type="match status" value="1"/>
</dbReference>
<dbReference type="FunFam" id="2.40.10.10:FF:000039">
    <property type="entry name" value="Brain-specific serine protease 4"/>
    <property type="match status" value="1"/>
</dbReference>
<dbReference type="Gene3D" id="2.40.10.10">
    <property type="entry name" value="Trypsin-like serine proteases"/>
    <property type="match status" value="2"/>
</dbReference>
<dbReference type="InterPro" id="IPR009003">
    <property type="entry name" value="Peptidase_S1_PA"/>
</dbReference>
<dbReference type="InterPro" id="IPR043504">
    <property type="entry name" value="Peptidase_S1_PA_chymotrypsin"/>
</dbReference>
<dbReference type="InterPro" id="IPR001314">
    <property type="entry name" value="Peptidase_S1A"/>
</dbReference>
<dbReference type="InterPro" id="IPR001254">
    <property type="entry name" value="Trypsin_dom"/>
</dbReference>
<dbReference type="InterPro" id="IPR018114">
    <property type="entry name" value="TRYPSIN_HIS"/>
</dbReference>
<dbReference type="InterPro" id="IPR033116">
    <property type="entry name" value="TRYPSIN_SER"/>
</dbReference>
<dbReference type="PANTHER" id="PTHR24253:SF144">
    <property type="entry name" value="CHYMOTRYPSIN-LIKE PROTEASE CTRL-1-RELATED"/>
    <property type="match status" value="1"/>
</dbReference>
<dbReference type="PANTHER" id="PTHR24253">
    <property type="entry name" value="TRANSMEMBRANE PROTEASE SERINE"/>
    <property type="match status" value="1"/>
</dbReference>
<dbReference type="Pfam" id="PF00089">
    <property type="entry name" value="Trypsin"/>
    <property type="match status" value="1"/>
</dbReference>
<dbReference type="PRINTS" id="PR00722">
    <property type="entry name" value="CHYMOTRYPSIN"/>
</dbReference>
<dbReference type="SMART" id="SM00020">
    <property type="entry name" value="Tryp_SPc"/>
    <property type="match status" value="1"/>
</dbReference>
<dbReference type="SUPFAM" id="SSF50494">
    <property type="entry name" value="Trypsin-like serine proteases"/>
    <property type="match status" value="1"/>
</dbReference>
<dbReference type="PROSITE" id="PS50240">
    <property type="entry name" value="TRYPSIN_DOM"/>
    <property type="match status" value="1"/>
</dbReference>
<dbReference type="PROSITE" id="PS00134">
    <property type="entry name" value="TRYPSIN_HIS"/>
    <property type="match status" value="1"/>
</dbReference>
<dbReference type="PROSITE" id="PS00135">
    <property type="entry name" value="TRYPSIN_SER"/>
    <property type="match status" value="1"/>
</dbReference>
<feature type="signal peptide" evidence="2">
    <location>
        <begin position="1"/>
        <end position="20"/>
    </location>
</feature>
<feature type="propeptide" id="PRO_0000027486" description="Activation peptide" evidence="1">
    <location>
        <begin position="21"/>
        <end position="30"/>
    </location>
</feature>
<feature type="chain" id="PRO_0000027487" description="Tryptase">
    <location>
        <begin position="31"/>
        <end position="275"/>
    </location>
</feature>
<feature type="domain" description="Peptidase S1" evidence="3">
    <location>
        <begin position="31"/>
        <end position="272"/>
    </location>
</feature>
<feature type="active site" description="Charge relay system" evidence="1">
    <location>
        <position position="74"/>
    </location>
</feature>
<feature type="active site" description="Charge relay system" evidence="1">
    <location>
        <position position="121"/>
    </location>
</feature>
<feature type="active site" description="Charge relay system" evidence="1">
    <location>
        <position position="224"/>
    </location>
</feature>
<feature type="glycosylation site" description="N-linked (GlcNAc...) asparagine" evidence="2">
    <location>
        <position position="132"/>
    </location>
</feature>
<feature type="glycosylation site" description="N-linked (GlcNAc...) asparagine" evidence="2">
    <location>
        <position position="233"/>
    </location>
</feature>
<feature type="disulfide bond" evidence="3">
    <location>
        <begin position="59"/>
        <end position="75"/>
    </location>
</feature>
<feature type="disulfide bond" evidence="3">
    <location>
        <begin position="155"/>
        <end position="230"/>
    </location>
</feature>
<feature type="disulfide bond" evidence="3">
    <location>
        <begin position="188"/>
        <end position="211"/>
    </location>
</feature>
<feature type="disulfide bond" evidence="3">
    <location>
        <begin position="220"/>
        <end position="248"/>
    </location>
</feature>
<organism>
    <name type="scientific">Sus scrofa</name>
    <name type="common">Pig</name>
    <dbReference type="NCBI Taxonomy" id="9823"/>
    <lineage>
        <taxon>Eukaryota</taxon>
        <taxon>Metazoa</taxon>
        <taxon>Chordata</taxon>
        <taxon>Craniata</taxon>
        <taxon>Vertebrata</taxon>
        <taxon>Euteleostomi</taxon>
        <taxon>Mammalia</taxon>
        <taxon>Eutheria</taxon>
        <taxon>Laurasiatheria</taxon>
        <taxon>Artiodactyla</taxon>
        <taxon>Suina</taxon>
        <taxon>Suidae</taxon>
        <taxon>Sus</taxon>
    </lineage>
</organism>
<gene>
    <name type="primary">MCT7</name>
</gene>
<accession>Q9N2D1</accession>
<protein>
    <recommendedName>
        <fullName>Tryptase</fullName>
        <ecNumber>3.4.21.59</ecNumber>
    </recommendedName>
</protein>
<name>TRYT_PIG</name>